<keyword id="KW-0997">Cell inner membrane</keyword>
<keyword id="KW-1003">Cell membrane</keyword>
<keyword id="KW-0472">Membrane</keyword>
<proteinExistence type="inferred from homology"/>
<reference key="1">
    <citation type="submission" date="2005-10" db="EMBL/GenBank/DDBJ databases">
        <title>Complete sequence of chromosome 1 of Burkholderia sp. 383.</title>
        <authorList>
            <consortium name="US DOE Joint Genome Institute"/>
            <person name="Copeland A."/>
            <person name="Lucas S."/>
            <person name="Lapidus A."/>
            <person name="Barry K."/>
            <person name="Detter J.C."/>
            <person name="Glavina T."/>
            <person name="Hammon N."/>
            <person name="Israni S."/>
            <person name="Pitluck S."/>
            <person name="Chain P."/>
            <person name="Malfatti S."/>
            <person name="Shin M."/>
            <person name="Vergez L."/>
            <person name="Schmutz J."/>
            <person name="Larimer F."/>
            <person name="Land M."/>
            <person name="Kyrpides N."/>
            <person name="Lykidis A."/>
            <person name="Richardson P."/>
        </authorList>
    </citation>
    <scope>NUCLEOTIDE SEQUENCE [LARGE SCALE GENOMIC DNA]</scope>
    <source>
        <strain>ATCC 17760 / DSM 23089 / LMG 22485 / NCIMB 9086 / R18194 / 383</strain>
    </source>
</reference>
<accession>Q39BQ1</accession>
<protein>
    <recommendedName>
        <fullName evidence="1">Putative membrane protein insertion efficiency factor</fullName>
    </recommendedName>
</protein>
<sequence>METVLIALLRFYKVAVSPMLGNRCRFYPSCSDYAREAIQYHGAARGTYLAVRRVCRCHPFSAGGIDLVPPPNSDTRARGEADARSHRL</sequence>
<gene>
    <name type="ordered locus">Bcep18194_A6521</name>
</gene>
<evidence type="ECO:0000255" key="1">
    <source>
        <dbReference type="HAMAP-Rule" id="MF_00386"/>
    </source>
</evidence>
<evidence type="ECO:0000256" key="2">
    <source>
        <dbReference type="SAM" id="MobiDB-lite"/>
    </source>
</evidence>
<organism>
    <name type="scientific">Burkholderia lata (strain ATCC 17760 / DSM 23089 / LMG 22485 / NCIMB 9086 / R18194 / 383)</name>
    <dbReference type="NCBI Taxonomy" id="482957"/>
    <lineage>
        <taxon>Bacteria</taxon>
        <taxon>Pseudomonadati</taxon>
        <taxon>Pseudomonadota</taxon>
        <taxon>Betaproteobacteria</taxon>
        <taxon>Burkholderiales</taxon>
        <taxon>Burkholderiaceae</taxon>
        <taxon>Burkholderia</taxon>
        <taxon>Burkholderia cepacia complex</taxon>
    </lineage>
</organism>
<dbReference type="EMBL" id="CP000151">
    <property type="protein sequence ID" value="ABB10115.1"/>
    <property type="molecule type" value="Genomic_DNA"/>
</dbReference>
<dbReference type="KEGG" id="bur:Bcep18194_A6521"/>
<dbReference type="HOGENOM" id="CLU_144811_2_2_4"/>
<dbReference type="Proteomes" id="UP000002705">
    <property type="component" value="Chromosome 1"/>
</dbReference>
<dbReference type="GO" id="GO:0005886">
    <property type="term" value="C:plasma membrane"/>
    <property type="evidence" value="ECO:0007669"/>
    <property type="project" value="UniProtKB-SubCell"/>
</dbReference>
<dbReference type="HAMAP" id="MF_00386">
    <property type="entry name" value="UPF0161_YidD"/>
    <property type="match status" value="1"/>
</dbReference>
<dbReference type="InterPro" id="IPR002696">
    <property type="entry name" value="Membr_insert_effic_factor_YidD"/>
</dbReference>
<dbReference type="NCBIfam" id="TIGR00278">
    <property type="entry name" value="membrane protein insertion efficiency factor YidD"/>
    <property type="match status" value="1"/>
</dbReference>
<dbReference type="PANTHER" id="PTHR33383">
    <property type="entry name" value="MEMBRANE PROTEIN INSERTION EFFICIENCY FACTOR-RELATED"/>
    <property type="match status" value="1"/>
</dbReference>
<dbReference type="PANTHER" id="PTHR33383:SF1">
    <property type="entry name" value="MEMBRANE PROTEIN INSERTION EFFICIENCY FACTOR-RELATED"/>
    <property type="match status" value="1"/>
</dbReference>
<dbReference type="Pfam" id="PF01809">
    <property type="entry name" value="YidD"/>
    <property type="match status" value="1"/>
</dbReference>
<dbReference type="SMART" id="SM01234">
    <property type="entry name" value="Haemolytic"/>
    <property type="match status" value="1"/>
</dbReference>
<feature type="chain" id="PRO_0000253090" description="Putative membrane protein insertion efficiency factor">
    <location>
        <begin position="1"/>
        <end position="88"/>
    </location>
</feature>
<feature type="region of interest" description="Disordered" evidence="2">
    <location>
        <begin position="68"/>
        <end position="88"/>
    </location>
</feature>
<feature type="compositionally biased region" description="Basic and acidic residues" evidence="2">
    <location>
        <begin position="75"/>
        <end position="88"/>
    </location>
</feature>
<name>YIDD_BURL3</name>
<comment type="function">
    <text evidence="1">Could be involved in insertion of integral membrane proteins into the membrane.</text>
</comment>
<comment type="subcellular location">
    <subcellularLocation>
        <location evidence="1">Cell inner membrane</location>
        <topology evidence="1">Peripheral membrane protein</topology>
        <orientation evidence="1">Cytoplasmic side</orientation>
    </subcellularLocation>
</comment>
<comment type="similarity">
    <text evidence="1">Belongs to the UPF0161 family.</text>
</comment>